<evidence type="ECO:0000250" key="1"/>
<evidence type="ECO:0000256" key="2">
    <source>
        <dbReference type="SAM" id="MobiDB-lite"/>
    </source>
</evidence>
<evidence type="ECO:0000305" key="3"/>
<reference key="1">
    <citation type="journal article" date="2009" name="Genome Res.">
        <title>Comparative genomic analyses of the human fungal pathogens Coccidioides and their relatives.</title>
        <authorList>
            <person name="Sharpton T.J."/>
            <person name="Stajich J.E."/>
            <person name="Rounsley S.D."/>
            <person name="Gardner M.J."/>
            <person name="Wortman J.R."/>
            <person name="Jordar V.S."/>
            <person name="Maiti R."/>
            <person name="Kodira C.D."/>
            <person name="Neafsey D.E."/>
            <person name="Zeng Q."/>
            <person name="Hung C.-Y."/>
            <person name="McMahan C."/>
            <person name="Muszewska A."/>
            <person name="Grynberg M."/>
            <person name="Mandel M.A."/>
            <person name="Kellner E.M."/>
            <person name="Barker B.M."/>
            <person name="Galgiani J.N."/>
            <person name="Orbach M.J."/>
            <person name="Kirkland T.N."/>
            <person name="Cole G.T."/>
            <person name="Henn M.R."/>
            <person name="Birren B.W."/>
            <person name="Taylor J.W."/>
        </authorList>
    </citation>
    <scope>NUCLEOTIDE SEQUENCE [LARGE SCALE GENOMIC DNA]</scope>
    <source>
        <strain>RS</strain>
    </source>
</reference>
<reference key="2">
    <citation type="journal article" date="2010" name="Genome Res.">
        <title>Population genomic sequencing of Coccidioides fungi reveals recent hybridization and transposon control.</title>
        <authorList>
            <person name="Neafsey D.E."/>
            <person name="Barker B.M."/>
            <person name="Sharpton T.J."/>
            <person name="Stajich J.E."/>
            <person name="Park D.J."/>
            <person name="Whiston E."/>
            <person name="Hung C.-Y."/>
            <person name="McMahan C."/>
            <person name="White J."/>
            <person name="Sykes S."/>
            <person name="Heiman D."/>
            <person name="Young S."/>
            <person name="Zeng Q."/>
            <person name="Abouelleil A."/>
            <person name="Aftuck L."/>
            <person name="Bessette D."/>
            <person name="Brown A."/>
            <person name="FitzGerald M."/>
            <person name="Lui A."/>
            <person name="Macdonald J.P."/>
            <person name="Priest M."/>
            <person name="Orbach M.J."/>
            <person name="Galgiani J.N."/>
            <person name="Kirkland T.N."/>
            <person name="Cole G.T."/>
            <person name="Birren B.W."/>
            <person name="Henn M.R."/>
            <person name="Taylor J.W."/>
            <person name="Rounsley S.D."/>
        </authorList>
    </citation>
    <scope>GENOME REANNOTATION</scope>
    <source>
        <strain>RS</strain>
    </source>
</reference>
<sequence>MEPSPDVPLEEITWHSPQHVQMMGGFLHSNNILFYFAESPFFDPTSNNASLALQAMHNENLRPFIETRGAFEGRLKTMQGLEFIVAHDPLLEAAAANAAAVARGEQPKEASNVWVIRKQMRRRSAAMGGQDDVQVLATYFVVGDSVFMAPSVWSVVGRRMLSTVTSLTKVLSTASALLTFSPSYGHSYLPHVPKSLEPTQLGQQSAQQSKETTPMPDMSGDKTTSRSALADASTTTLNASALQDARDFAETLNLLARYGNEYIDETPLAGEPGSFIFTKASASAAEQLSVAGAGAQASRQNIRSGATTPVPFGAGRPASVQPDSTKGKAADRPPAATKDKGKKRKSKIGSMSQ</sequence>
<gene>
    <name type="primary">MED6</name>
    <name type="ORF">CIMG_02716</name>
</gene>
<organism>
    <name type="scientific">Coccidioides immitis (strain RS)</name>
    <name type="common">Valley fever fungus</name>
    <dbReference type="NCBI Taxonomy" id="246410"/>
    <lineage>
        <taxon>Eukaryota</taxon>
        <taxon>Fungi</taxon>
        <taxon>Dikarya</taxon>
        <taxon>Ascomycota</taxon>
        <taxon>Pezizomycotina</taxon>
        <taxon>Eurotiomycetes</taxon>
        <taxon>Eurotiomycetidae</taxon>
        <taxon>Onygenales</taxon>
        <taxon>Onygenaceae</taxon>
        <taxon>Coccidioides</taxon>
    </lineage>
</organism>
<accession>Q1E3Z7</accession>
<accession>A0A0D6K9Q8</accession>
<accession>J3KMD4</accession>
<protein>
    <recommendedName>
        <fullName>Mediator of RNA polymerase II transcription subunit 6</fullName>
    </recommendedName>
    <alternativeName>
        <fullName>Mediator complex subunit 6</fullName>
    </alternativeName>
</protein>
<comment type="function">
    <text evidence="1">Component of the Mediator complex, a coactivator involved in the regulated transcription of nearly all RNA polymerase II-dependent genes. Mediator functions as a bridge to convey information from gene-specific regulatory proteins to the basal RNA polymerase II transcription machinery. Mediator is recruited to promoters by direct interactions with regulatory proteins and serves as a scaffold for the assembly of a functional preinitiation complex with RNA polymerase II and the general transcription factors (By similarity).</text>
</comment>
<comment type="subunit">
    <text evidence="1">Component of the Mediator complex.</text>
</comment>
<comment type="subcellular location">
    <subcellularLocation>
        <location evidence="1">Nucleus</location>
    </subcellularLocation>
</comment>
<comment type="similarity">
    <text evidence="3">Belongs to the Mediator complex subunit 6 family.</text>
</comment>
<feature type="chain" id="PRO_0000303055" description="Mediator of RNA polymerase II transcription subunit 6">
    <location>
        <begin position="1"/>
        <end position="353"/>
    </location>
</feature>
<feature type="region of interest" description="Disordered" evidence="2">
    <location>
        <begin position="193"/>
        <end position="231"/>
    </location>
</feature>
<feature type="region of interest" description="Disordered" evidence="2">
    <location>
        <begin position="296"/>
        <end position="353"/>
    </location>
</feature>
<feature type="compositionally biased region" description="Polar residues" evidence="2">
    <location>
        <begin position="197"/>
        <end position="212"/>
    </location>
</feature>
<feature type="compositionally biased region" description="Polar residues" evidence="2">
    <location>
        <begin position="297"/>
        <end position="307"/>
    </location>
</feature>
<keyword id="KW-0010">Activator</keyword>
<keyword id="KW-0539">Nucleus</keyword>
<keyword id="KW-1185">Reference proteome</keyword>
<keyword id="KW-0804">Transcription</keyword>
<keyword id="KW-0805">Transcription regulation</keyword>
<name>MED6_COCIM</name>
<dbReference type="EMBL" id="GG704911">
    <property type="protein sequence ID" value="EAS37362.2"/>
    <property type="molecule type" value="Genomic_DNA"/>
</dbReference>
<dbReference type="RefSeq" id="XP_001248945.2">
    <property type="nucleotide sequence ID" value="XM_001248944.2"/>
</dbReference>
<dbReference type="FunCoup" id="Q1E3Z7">
    <property type="interactions" value="777"/>
</dbReference>
<dbReference type="STRING" id="246410.Q1E3Z7"/>
<dbReference type="GeneID" id="4567688"/>
<dbReference type="KEGG" id="cim:CIMG_02716"/>
<dbReference type="VEuPathDB" id="FungiDB:CIMG_02716"/>
<dbReference type="InParanoid" id="Q1E3Z7"/>
<dbReference type="OMA" id="ASHGHTY"/>
<dbReference type="OrthoDB" id="344220at2759"/>
<dbReference type="Proteomes" id="UP000001261">
    <property type="component" value="Unassembled WGS sequence"/>
</dbReference>
<dbReference type="GO" id="GO:0016592">
    <property type="term" value="C:mediator complex"/>
    <property type="evidence" value="ECO:0007669"/>
    <property type="project" value="InterPro"/>
</dbReference>
<dbReference type="GO" id="GO:0003712">
    <property type="term" value="F:transcription coregulator activity"/>
    <property type="evidence" value="ECO:0007669"/>
    <property type="project" value="InterPro"/>
</dbReference>
<dbReference type="GO" id="GO:0006357">
    <property type="term" value="P:regulation of transcription by RNA polymerase II"/>
    <property type="evidence" value="ECO:0007669"/>
    <property type="project" value="InterPro"/>
</dbReference>
<dbReference type="FunFam" id="3.10.450.580:FF:000003">
    <property type="entry name" value="Mediator of RNA polymerase II transcription subunit 6"/>
    <property type="match status" value="1"/>
</dbReference>
<dbReference type="Gene3D" id="3.10.450.580">
    <property type="entry name" value="Mediator complex, subunit Med6"/>
    <property type="match status" value="1"/>
</dbReference>
<dbReference type="InterPro" id="IPR007018">
    <property type="entry name" value="Mediator_Med6"/>
</dbReference>
<dbReference type="InterPro" id="IPR038566">
    <property type="entry name" value="Mediator_Med6_sf"/>
</dbReference>
<dbReference type="PANTHER" id="PTHR13104">
    <property type="entry name" value="MED-6-RELATED"/>
    <property type="match status" value="1"/>
</dbReference>
<dbReference type="Pfam" id="PF04934">
    <property type="entry name" value="Med6"/>
    <property type="match status" value="1"/>
</dbReference>
<proteinExistence type="inferred from homology"/>